<comment type="sequence caution" evidence="1">
    <conflict type="frameshift">
        <sequence resource="EMBL-CDS" id="AAC46428"/>
    </conflict>
</comment>
<comment type="sequence caution" evidence="1">
    <conflict type="erroneous initiation">
        <sequence resource="EMBL-CDS" id="CAG68307"/>
    </conflict>
</comment>
<protein>
    <recommendedName>
        <fullName>Uncharacterized protein ACIAD1444</fullName>
    </recommendedName>
    <alternativeName>
        <fullName>ORF2</fullName>
    </alternativeName>
</protein>
<feature type="chain" id="PRO_0000066070" description="Uncharacterized protein ACIAD1444">
    <location>
        <begin position="1"/>
        <end position="509"/>
    </location>
</feature>
<feature type="domain" description="G">
    <location>
        <begin position="108"/>
        <end position="225"/>
    </location>
</feature>
<name>Y1444_ACIAD</name>
<sequence length="509" mass="57600">MTSGGHIQLFIEHTRQIATAQGDIQLALQSMQQWREAFATALKQNTFDLTGWSPQTKIANQLKQFNHKLTTHVSNWDTEWHTFSAAQSVAEVFHDRVMLLVFGKFNAGKSSLCNLLAECFRSHEQTVQYFHVQNEQIFYTESHLREGATETTAQLQGVCLGEKLILLDTPGLHSGTQKNAALTQKFIDSADGVLWLSSATSPGQVQELDALGRELKRHKPLFPVITRSDFVEEDEIDGELCTVLCNKNSEQRALQESDVLMRAKEKLHSMQVDVSLLKPPVSVSTQMAREADMNPQAMNEAGFERLFAALLALIEPALRYKQRKPAEVLLHFLQEHIIEGLRFYLQPDLEQIQQDLKQAQDDLRQLHTDLAEAVWRSVLPELPQLLEQHASTQNIDAVVNSLNEWINVAFEQQLAIQLDAYGLNLDSLSKIEKTEKMQYERIAGMVVHDGLYTTLTQQIQQAVKASTSELIDQCQAQLEQSIKHVQTLDETFIDYSAALDQLSQALRIE</sequence>
<keyword id="KW-0058">Aromatic hydrocarbons catabolism</keyword>
<accession>P07777</accession>
<accession>Q6FCA4</accession>
<reference key="1">
    <citation type="journal article" date="1991" name="J. Bacteriol.">
        <title>Nucleotide sequences of the Acinetobacter calcoaceticus benABC genes for benzoate 1,2-dioxygenase reveal evolutionary relationships among multicomponent oxygenases.</title>
        <authorList>
            <person name="Neidle E.L."/>
            <person name="Hartnett C."/>
            <person name="Ornston N.L."/>
            <person name="Bairoch A."/>
            <person name="Rekik M."/>
            <person name="Harayama S."/>
        </authorList>
    </citation>
    <scope>NUCLEOTIDE SEQUENCE [GENOMIC DNA]</scope>
</reference>
<reference key="2">
    <citation type="journal article" date="2004" name="Nucleic Acids Res.">
        <title>Unique features revealed by the genome sequence of Acinetobacter sp. ADP1, a versatile and naturally transformation competent bacterium.</title>
        <authorList>
            <person name="Barbe V."/>
            <person name="Vallenet D."/>
            <person name="Fonknechten N."/>
            <person name="Kreimeyer A."/>
            <person name="Oztas S."/>
            <person name="Labarre L."/>
            <person name="Cruveiller S."/>
            <person name="Robert C."/>
            <person name="Duprat S."/>
            <person name="Wincker P."/>
            <person name="Ornston L.N."/>
            <person name="Weissenbach J."/>
            <person name="Marliere P."/>
            <person name="Cohen G.N."/>
            <person name="Medigue C."/>
        </authorList>
    </citation>
    <scope>NUCLEOTIDE SEQUENCE [LARGE SCALE GENOMIC DNA]</scope>
    <source>
        <strain>ATCC 33305 / BD413 / ADP1</strain>
    </source>
</reference>
<proteinExistence type="predicted"/>
<organism>
    <name type="scientific">Acinetobacter baylyi (strain ATCC 33305 / BD413 / ADP1)</name>
    <dbReference type="NCBI Taxonomy" id="62977"/>
    <lineage>
        <taxon>Bacteria</taxon>
        <taxon>Pseudomonadati</taxon>
        <taxon>Pseudomonadota</taxon>
        <taxon>Gammaproteobacteria</taxon>
        <taxon>Moraxellales</taxon>
        <taxon>Moraxellaceae</taxon>
        <taxon>Acinetobacter</taxon>
    </lineage>
</organism>
<evidence type="ECO:0000305" key="1"/>
<gene>
    <name type="ordered locus">ACIAD1444</name>
</gene>
<dbReference type="EMBL" id="AF009224">
    <property type="protein sequence ID" value="AAC46428.1"/>
    <property type="status" value="ALT_FRAME"/>
    <property type="molecule type" value="Genomic_DNA"/>
</dbReference>
<dbReference type="EMBL" id="CR543861">
    <property type="protein sequence ID" value="CAG68307.1"/>
    <property type="status" value="ALT_INIT"/>
    <property type="molecule type" value="Genomic_DNA"/>
</dbReference>
<dbReference type="RefSeq" id="WP_004925465.1">
    <property type="nucleotide sequence ID" value="NC_005966.1"/>
</dbReference>
<dbReference type="STRING" id="202950.GCA_001485005_01198"/>
<dbReference type="GeneID" id="45233856"/>
<dbReference type="KEGG" id="aci:ACIAD1444"/>
<dbReference type="eggNOG" id="COG0699">
    <property type="taxonomic scope" value="Bacteria"/>
</dbReference>
<dbReference type="HOGENOM" id="CLU_517491_0_0_6"/>
<dbReference type="OrthoDB" id="7230468at2"/>
<dbReference type="BioCyc" id="ASP62977:ACIAD_RS06670-MONOMER"/>
<dbReference type="Proteomes" id="UP000000430">
    <property type="component" value="Chromosome"/>
</dbReference>
<dbReference type="GO" id="GO:0005525">
    <property type="term" value="F:GTP binding"/>
    <property type="evidence" value="ECO:0007669"/>
    <property type="project" value="InterPro"/>
</dbReference>
<dbReference type="GO" id="GO:0009056">
    <property type="term" value="P:catabolic process"/>
    <property type="evidence" value="ECO:0007669"/>
    <property type="project" value="UniProtKB-KW"/>
</dbReference>
<dbReference type="Gene3D" id="3.40.50.300">
    <property type="entry name" value="P-loop containing nucleotide triphosphate hydrolases"/>
    <property type="match status" value="1"/>
</dbReference>
<dbReference type="InterPro" id="IPR006073">
    <property type="entry name" value="GTP-bd"/>
</dbReference>
<dbReference type="InterPro" id="IPR027417">
    <property type="entry name" value="P-loop_NTPase"/>
</dbReference>
<dbReference type="InterPro" id="IPR051943">
    <property type="entry name" value="TRAFAC_Dynamin-like_GTPase"/>
</dbReference>
<dbReference type="PANTHER" id="PTHR43681:SF1">
    <property type="entry name" value="SARCALUMENIN"/>
    <property type="match status" value="1"/>
</dbReference>
<dbReference type="PANTHER" id="PTHR43681">
    <property type="entry name" value="TRANSMEMBRANE GTPASE FZO"/>
    <property type="match status" value="1"/>
</dbReference>
<dbReference type="Pfam" id="PF01926">
    <property type="entry name" value="MMR_HSR1"/>
    <property type="match status" value="1"/>
</dbReference>
<dbReference type="SUPFAM" id="SSF52540">
    <property type="entry name" value="P-loop containing nucleoside triphosphate hydrolases"/>
    <property type="match status" value="1"/>
</dbReference>